<gene>
    <name evidence="1" type="primary">HA</name>
</gene>
<name>HEMA_I72A3</name>
<keyword id="KW-1167">Clathrin- and caveolin-independent endocytosis of virus by host</keyword>
<keyword id="KW-1165">Clathrin-mediated endocytosis of virus by host</keyword>
<keyword id="KW-1015">Disulfide bond</keyword>
<keyword id="KW-1170">Fusion of virus membrane with host endosomal membrane</keyword>
<keyword id="KW-1168">Fusion of virus membrane with host membrane</keyword>
<keyword id="KW-0325">Glycoprotein</keyword>
<keyword id="KW-0348">Hemagglutinin</keyword>
<keyword id="KW-1032">Host cell membrane</keyword>
<keyword id="KW-1043">Host membrane</keyword>
<keyword id="KW-0945">Host-virus interaction</keyword>
<keyword id="KW-0449">Lipoprotein</keyword>
<keyword id="KW-0472">Membrane</keyword>
<keyword id="KW-0564">Palmitate</keyword>
<keyword id="KW-0732">Signal</keyword>
<keyword id="KW-0812">Transmembrane</keyword>
<keyword id="KW-1133">Transmembrane helix</keyword>
<keyword id="KW-1161">Viral attachment to host cell</keyword>
<keyword id="KW-0261">Viral envelope protein</keyword>
<keyword id="KW-1162">Viral penetration into host cytoplasm</keyword>
<keyword id="KW-0946">Virion</keyword>
<keyword id="KW-1164">Virus endocytosis by host</keyword>
<keyword id="KW-1160">Virus entry into host cell</keyword>
<organismHost>
    <name type="scientific">Aves</name>
    <dbReference type="NCBI Taxonomy" id="8782"/>
</organismHost>
<organismHost>
    <name type="scientific">Cetacea</name>
    <name type="common">whales</name>
    <dbReference type="NCBI Taxonomy" id="9721"/>
</organismHost>
<organismHost>
    <name type="scientific">Homo sapiens</name>
    <name type="common">Human</name>
    <dbReference type="NCBI Taxonomy" id="9606"/>
</organismHost>
<organismHost>
    <name type="scientific">Phocidae</name>
    <name type="common">true seals</name>
    <dbReference type="NCBI Taxonomy" id="9709"/>
</organismHost>
<organismHost>
    <name type="scientific">Sus scrofa</name>
    <name type="common">Pig</name>
    <dbReference type="NCBI Taxonomy" id="9823"/>
</organismHost>
<evidence type="ECO:0000255" key="1">
    <source>
        <dbReference type="HAMAP-Rule" id="MF_04072"/>
    </source>
</evidence>
<evidence type="ECO:0000305" key="2"/>
<comment type="function">
    <text>Binds to sialic acid-containing receptors on the cell surface, bringing about the attachment of the virus particle to the cell. This attachment induces virion internalization of about two third of the virus particles through clathrin-dependent endocytosis and about one third through a clathrin- and caveolin-independent pathway. Plays a major role in the determination of host range restriction and virulence. Class I viral fusion protein. Responsible for penetration of the virus into the cell cytoplasm by mediating the fusion of the membrane of the endocytosed virus particle with the endosomal membrane. Low pH in endosomes induces an irreversible conformational change in HA2, releasing the fusion hydrophobic peptide. Several trimers are required to form a competent fusion pore.</text>
</comment>
<comment type="function">
    <text evidence="1">Binds to sialic acid-containing receptors on the cell surface, bringing about the attachment of the virus particle to the cell. This attachment induces virion internalization either through clathrin-dependent endocytosis or through clathrin- and caveolin-independent pathway. Plays a major role in the determination of host range restriction and virulence. Class I viral fusion protein. Responsible for penetration of the virus into the cell cytoplasm by mediating the fusion of the membrane of the endocytosed virus particle with the endosomal membrane. Low pH in endosomes induces an irreversible conformational change in HA2, releasing the fusion hydrophobic peptide. Several trimers are required to form a competent fusion pore.</text>
</comment>
<comment type="subunit">
    <text evidence="1">Homotrimer of disulfide-linked HA1-HA2.</text>
</comment>
<comment type="subcellular location">
    <subcellularLocation>
        <location evidence="1">Virion membrane</location>
        <topology evidence="1">Single-pass type I membrane protein</topology>
    </subcellularLocation>
    <subcellularLocation>
        <location evidence="1">Host apical cell membrane</location>
        <topology evidence="1">Single-pass type I membrane protein</topology>
    </subcellularLocation>
    <text evidence="1">Targeted to the apical plasma membrane in epithelial polarized cells through a signal present in the transmembrane domain. Associated with glycosphingolipid- and cholesterol-enriched detergent-resistant lipid rafts.</text>
</comment>
<comment type="PTM">
    <text evidence="1">Palmitoylated.</text>
</comment>
<comment type="PTM">
    <text evidence="1">In natural infection, inactive HA is matured into HA1 and HA2 outside the cell by one or more trypsin-like, arginine-specific endoprotease secreted by the bronchial epithelial cells. One identified protease that may be involved in this process is secreted in lungs by club cells.</text>
</comment>
<comment type="miscellaneous">
    <text>Major glycoprotein, comprises over 80% of the envelope proteins present in virus particle.</text>
</comment>
<comment type="miscellaneous">
    <text>The extent of infection into host organism is determined by HA. Influenza viruses bud from the apical surface of polarized epithelial cells (e.g. bronchial epithelial cells) into lumen of lungs and are therefore usually pneumotropic. The reason is that HA is cleaved by tryptase clara which is restricted to lungs. However, HAs of H5 and H7 pantropic avian viruses subtypes can be cleaved by furin and subtilisin-type enzymes, allowing the virus to grow in other organs than lungs.</text>
</comment>
<comment type="miscellaneous">
    <text evidence="2">The influenza A genome consist of 8 RNA segments. Genetic variation of hemagglutinin and/or neuraminidase genes results in the emergence of new influenza strains. The mechanism of variation can be the result of point mutations or the result of genetic reassortment between segments of two different strains.</text>
</comment>
<comment type="similarity">
    <text evidence="1">Belongs to the influenza viruses hemagglutinin family.</text>
</comment>
<sequence length="566" mass="63369">MKTIIALSYIFCLVLGQDFPGNDNSTATLCLGHHAVPNGTLVKTITNDQIEVTNATELVQSSSTGKICNNPHRILDGIDCTLIDALLGDPHCDGFQNETWDLFVERSKAFSNCYPYDVPDYASLRSLVASSGTLEFINEGFTWTGVTQNGGSNACKRGPDSGFFSRLNWLYKSGSTYPVLNVTMPNNDNFDKLYIWGVHHPSTDQEQTSLYVQASGRVTVSTKRSQQTIIPNIGSRPWVRGLSSRISIYWTIVKPGDILVINSNGNLIAPRGYFKMRTGKSSIMRSDAPIGTCISECITPNGSIPNDKPFQNVNKITYGACPKYVKQNTLKLATGMRNVPEKQTRGLFGAIAGFIENGWEGMIDGWYGFRHQNSEGTGQAADLKSTQAAIDQINGKLNRVIEKTNEKFHQIEKEFSEVEGRIQDLEKYVEDTKIDLWSYNAELLVALENQHTIDLTDSEMNKLFEKTRRQLRENAEDMGNGCFKIYHKCDNACIGSIRNGTYDHDVYRDEALNNRFQIKGVELKSGYKDWILWISFAISCFLLCVVLLGFIMWACQKGNIRCNICI</sequence>
<feature type="signal peptide" evidence="1">
    <location>
        <begin position="1"/>
        <end position="16"/>
    </location>
</feature>
<feature type="chain" id="PRO_0000440428" description="Hemagglutinin" evidence="1">
    <location>
        <begin position="17"/>
        <end position="566"/>
    </location>
</feature>
<feature type="chain" id="PRO_0000039026" description="Hemagglutinin HA1 chain">
    <location>
        <begin position="17"/>
        <end position="344"/>
    </location>
</feature>
<feature type="chain" id="PRO_0000039027" description="Hemagglutinin HA2 chain" evidence="1">
    <location>
        <begin position="346"/>
        <end position="566"/>
    </location>
</feature>
<feature type="topological domain" description="Extracellular" evidence="1">
    <location>
        <begin position="17"/>
        <end position="530"/>
    </location>
</feature>
<feature type="transmembrane region" description="Helical" evidence="1">
    <location>
        <begin position="531"/>
        <end position="551"/>
    </location>
</feature>
<feature type="topological domain" description="Cytoplasmic" evidence="1">
    <location>
        <begin position="552"/>
        <end position="566"/>
    </location>
</feature>
<feature type="site" description="Cleavage; by host" evidence="1">
    <location>
        <begin position="345"/>
        <end position="346"/>
    </location>
</feature>
<feature type="lipid moiety-binding region" description="S-palmitoyl cysteine; by host" evidence="1">
    <location>
        <position position="555"/>
    </location>
</feature>
<feature type="lipid moiety-binding region" description="S-palmitoyl cysteine; by host" evidence="1">
    <location>
        <position position="562"/>
    </location>
</feature>
<feature type="lipid moiety-binding region" description="S-palmitoyl cysteine; by host" evidence="1">
    <location>
        <position position="565"/>
    </location>
</feature>
<feature type="glycosylation site" description="N-linked (GlcNAc...) asparagine; by host" evidence="1">
    <location>
        <position position="24"/>
    </location>
</feature>
<feature type="glycosylation site" description="N-linked (GlcNAc...) asparagine; by host" evidence="1">
    <location>
        <position position="38"/>
    </location>
</feature>
<feature type="glycosylation site" description="N-linked (GlcNAc...) asparagine; by host" evidence="1">
    <location>
        <position position="54"/>
    </location>
</feature>
<feature type="glycosylation site" description="N-linked (GlcNAc...) asparagine; by host" evidence="1">
    <location>
        <position position="97"/>
    </location>
</feature>
<feature type="glycosylation site" description="N-linked (GlcNAc...) asparagine; by host" evidence="1">
    <location>
        <position position="181"/>
    </location>
</feature>
<feature type="glycosylation site" description="N-linked (GlcNAc...) asparagine; by host" evidence="1">
    <location>
        <position position="301"/>
    </location>
</feature>
<feature type="glycosylation site" description="N-linked (GlcNAc...) asparagine; by host" evidence="1">
    <location>
        <position position="499"/>
    </location>
</feature>
<feature type="disulfide bond" description="Interchain (between HA1 and HA2 chains)" evidence="1">
    <location>
        <begin position="30"/>
        <end position="482"/>
    </location>
</feature>
<feature type="disulfide bond" evidence="1">
    <location>
        <begin position="68"/>
        <end position="293"/>
    </location>
</feature>
<feature type="disulfide bond" evidence="1">
    <location>
        <begin position="80"/>
        <end position="92"/>
    </location>
</feature>
<feature type="disulfide bond" evidence="1">
    <location>
        <begin position="113"/>
        <end position="155"/>
    </location>
</feature>
<feature type="disulfide bond" evidence="1">
    <location>
        <begin position="297"/>
        <end position="321"/>
    </location>
</feature>
<feature type="disulfide bond" evidence="1">
    <location>
        <begin position="489"/>
        <end position="493"/>
    </location>
</feature>
<feature type="sequence conflict" description="In Ref. 2; CAA24273." evidence="2" ref="2">
    <original>S</original>
    <variation>L</variation>
    <location>
        <position position="126"/>
    </location>
</feature>
<feature type="sequence conflict" description="In Ref. 2; CAA24273." evidence="2" ref="2">
    <original>W</original>
    <variation>L</variation>
    <location>
        <position position="143"/>
    </location>
</feature>
<feature type="sequence conflict" description="In Ref. 2; CAA24273." evidence="2" ref="2">
    <original>L</original>
    <variation>Q</variation>
    <location>
        <position position="242"/>
    </location>
</feature>
<feature type="sequence conflict" description="In Ref. 2; CAA24273." evidence="2" ref="2">
    <original>Q</original>
    <variation>R</variation>
    <location>
        <position position="343"/>
    </location>
</feature>
<feature type="sequence conflict" description="In Ref. 2; CAA24273." evidence="2" ref="2">
    <original>E</original>
    <variation>G</variation>
    <location>
        <position position="448"/>
    </location>
</feature>
<protein>
    <recommendedName>
        <fullName evidence="1">Hemagglutinin</fullName>
    </recommendedName>
    <component>
        <recommendedName>
            <fullName evidence="1">Hemagglutinin HA1 chain</fullName>
        </recommendedName>
    </component>
    <component>
        <recommendedName>
            <fullName evidence="1">Hemagglutinin HA2 chain</fullName>
        </recommendedName>
    </component>
</protein>
<dbReference type="EMBL" id="CY002096">
    <property type="protein sequence ID" value="AAZ43383.1"/>
    <property type="molecule type" value="Genomic_RNA"/>
</dbReference>
<dbReference type="EMBL" id="V01089">
    <property type="protein sequence ID" value="CAA24273.1"/>
    <property type="molecule type" value="Genomic_RNA"/>
</dbReference>
<dbReference type="PIR" id="A94441">
    <property type="entry name" value="HMIVHM"/>
</dbReference>
<dbReference type="BMRB" id="P03439"/>
<dbReference type="SMR" id="P03439"/>
<dbReference type="GlyCosmos" id="P03439">
    <property type="glycosylation" value="7 sites, No reported glycans"/>
</dbReference>
<dbReference type="Proteomes" id="UP000118421">
    <property type="component" value="Genome"/>
</dbReference>
<dbReference type="GO" id="GO:0020002">
    <property type="term" value="C:host cell plasma membrane"/>
    <property type="evidence" value="ECO:0007669"/>
    <property type="project" value="UniProtKB-SubCell"/>
</dbReference>
<dbReference type="GO" id="GO:0016020">
    <property type="term" value="C:membrane"/>
    <property type="evidence" value="ECO:0007669"/>
    <property type="project" value="UniProtKB-UniRule"/>
</dbReference>
<dbReference type="GO" id="GO:0019031">
    <property type="term" value="C:viral envelope"/>
    <property type="evidence" value="ECO:0007669"/>
    <property type="project" value="UniProtKB-UniRule"/>
</dbReference>
<dbReference type="GO" id="GO:0055036">
    <property type="term" value="C:virion membrane"/>
    <property type="evidence" value="ECO:0007669"/>
    <property type="project" value="UniProtKB-SubCell"/>
</dbReference>
<dbReference type="GO" id="GO:0046789">
    <property type="term" value="F:host cell surface receptor binding"/>
    <property type="evidence" value="ECO:0007669"/>
    <property type="project" value="UniProtKB-UniRule"/>
</dbReference>
<dbReference type="GO" id="GO:0075512">
    <property type="term" value="P:clathrin-dependent endocytosis of virus by host cell"/>
    <property type="evidence" value="ECO:0007669"/>
    <property type="project" value="UniProtKB-UniRule"/>
</dbReference>
<dbReference type="GO" id="GO:0039654">
    <property type="term" value="P:fusion of virus membrane with host endosome membrane"/>
    <property type="evidence" value="ECO:0007669"/>
    <property type="project" value="UniProtKB-UniRule"/>
</dbReference>
<dbReference type="GO" id="GO:0019064">
    <property type="term" value="P:fusion of virus membrane with host plasma membrane"/>
    <property type="evidence" value="ECO:0007669"/>
    <property type="project" value="InterPro"/>
</dbReference>
<dbReference type="GO" id="GO:0046761">
    <property type="term" value="P:viral budding from plasma membrane"/>
    <property type="evidence" value="ECO:0007669"/>
    <property type="project" value="UniProtKB-UniRule"/>
</dbReference>
<dbReference type="GO" id="GO:0019062">
    <property type="term" value="P:virion attachment to host cell"/>
    <property type="evidence" value="ECO:0007669"/>
    <property type="project" value="UniProtKB-KW"/>
</dbReference>
<dbReference type="FunFam" id="3.90.20.10:FF:000001">
    <property type="entry name" value="Hemagglutinin"/>
    <property type="match status" value="1"/>
</dbReference>
<dbReference type="FunFam" id="3.90.209.20:FF:000001">
    <property type="entry name" value="Hemagglutinin"/>
    <property type="match status" value="1"/>
</dbReference>
<dbReference type="Gene3D" id="3.90.20.10">
    <property type="match status" value="1"/>
</dbReference>
<dbReference type="Gene3D" id="3.90.209.20">
    <property type="match status" value="1"/>
</dbReference>
<dbReference type="HAMAP" id="MF_04072">
    <property type="entry name" value="INFV_HEMA"/>
    <property type="match status" value="1"/>
</dbReference>
<dbReference type="InterPro" id="IPR008980">
    <property type="entry name" value="Capsid_hemagglutn"/>
</dbReference>
<dbReference type="InterPro" id="IPR013828">
    <property type="entry name" value="Hemagglutn_HA1_a/b_dom_sf"/>
</dbReference>
<dbReference type="InterPro" id="IPR000149">
    <property type="entry name" value="Hemagglutn_influenz_A"/>
</dbReference>
<dbReference type="InterPro" id="IPR001364">
    <property type="entry name" value="Hemagglutn_influenz_A/B"/>
</dbReference>
<dbReference type="Pfam" id="PF00509">
    <property type="entry name" value="Hemagglutinin"/>
    <property type="match status" value="1"/>
</dbReference>
<dbReference type="PRINTS" id="PR00330">
    <property type="entry name" value="HEMAGGLUTN1"/>
</dbReference>
<dbReference type="PRINTS" id="PR00329">
    <property type="entry name" value="HEMAGGLUTN12"/>
</dbReference>
<dbReference type="SUPFAM" id="SSF58064">
    <property type="entry name" value="Influenza hemagglutinin (stalk)"/>
    <property type="match status" value="1"/>
</dbReference>
<dbReference type="SUPFAM" id="SSF49818">
    <property type="entry name" value="Viral protein domain"/>
    <property type="match status" value="1"/>
</dbReference>
<reference key="1">
    <citation type="submission" date="2005-08" db="EMBL/GenBank/DDBJ databases">
        <title>The NIAID influenza genome sequencing project.</title>
        <authorList>
            <person name="Ghedin E."/>
            <person name="Spiro D."/>
            <person name="Miller N."/>
            <person name="Zaborsky J."/>
            <person name="Feldblyum T."/>
            <person name="Subbu V."/>
            <person name="Shumway M."/>
            <person name="Sparenborg J."/>
            <person name="Groveman L."/>
            <person name="Halpin R."/>
            <person name="Sitz J."/>
            <person name="Koo H."/>
            <person name="Salzberg S.L."/>
            <person name="Webster R.G."/>
            <person name="Hoffmann E."/>
            <person name="Krauss S."/>
            <person name="Naeve C."/>
            <person name="Bao Y."/>
            <person name="Bolotov P."/>
            <person name="Dernovoy D."/>
            <person name="Kiryutin B."/>
            <person name="Lipman D.J."/>
            <person name="Tatusova T."/>
        </authorList>
    </citation>
    <scope>NUCLEOTIDE SEQUENCE [GENOMIC RNA]</scope>
</reference>
<reference key="2">
    <citation type="book" date="1980" name="Structure and variation in influenza virus">
        <title>The haemagglutinin gene of influenza A virus: nucleotide sequence analysis of cloned DNA copies.</title>
        <editorList>
            <person name="Laver G."/>
            <person name="Air G."/>
        </editorList>
        <authorList>
            <person name="Sleigh M.J."/>
            <person name="Both G.W."/>
            <person name="Brownlee G.G."/>
            <person name="Bender V.J."/>
            <person name="Moss B.A."/>
        </authorList>
    </citation>
    <scope>NUCLEOTIDE SEQUENCE [GENOMIC RNA] OF 17-566</scope>
</reference>
<accession>P03439</accession>
<accession>Q463X5</accession>
<organism>
    <name type="scientific">Influenza A virus (strain A/Memphis/102/1972 H3N2)</name>
    <dbReference type="NCBI Taxonomy" id="385640"/>
    <lineage>
        <taxon>Viruses</taxon>
        <taxon>Riboviria</taxon>
        <taxon>Orthornavirae</taxon>
        <taxon>Negarnaviricota</taxon>
        <taxon>Polyploviricotina</taxon>
        <taxon>Insthoviricetes</taxon>
        <taxon>Articulavirales</taxon>
        <taxon>Orthomyxoviridae</taxon>
        <taxon>Alphainfluenzavirus</taxon>
        <taxon>Alphainfluenzavirus influenzae</taxon>
        <taxon>Influenza A virus</taxon>
    </lineage>
</organism>
<proteinExistence type="inferred from homology"/>